<reference key="1">
    <citation type="journal article" date="2008" name="J. Bacteriol.">
        <title>Genome sequence of a nephritogenic and highly transformable M49 strain of Streptococcus pyogenes.</title>
        <authorList>
            <person name="McShan W.M."/>
            <person name="Ferretti J.J."/>
            <person name="Karasawa T."/>
            <person name="Suvorov A.N."/>
            <person name="Lin S."/>
            <person name="Qin B."/>
            <person name="Jia H."/>
            <person name="Kenton S."/>
            <person name="Najar F."/>
            <person name="Wu H."/>
            <person name="Scott J."/>
            <person name="Roe B.A."/>
            <person name="Savic D.J."/>
        </authorList>
    </citation>
    <scope>NUCLEOTIDE SEQUENCE [LARGE SCALE GENOMIC DNA]</scope>
    <source>
        <strain>NZ131</strain>
    </source>
</reference>
<evidence type="ECO:0000255" key="1">
    <source>
        <dbReference type="HAMAP-Rule" id="MF_00377"/>
    </source>
</evidence>
<accession>B5XIP2</accession>
<keyword id="KW-0067">ATP-binding</keyword>
<keyword id="KW-0963">Cytoplasm</keyword>
<keyword id="KW-0235">DNA replication</keyword>
<keyword id="KW-0238">DNA-binding</keyword>
<keyword id="KW-0446">Lipid-binding</keyword>
<keyword id="KW-0547">Nucleotide-binding</keyword>
<dbReference type="EMBL" id="CP000829">
    <property type="protein sequence ID" value="ACI60365.1"/>
    <property type="molecule type" value="Genomic_DNA"/>
</dbReference>
<dbReference type="SMR" id="B5XIP2"/>
<dbReference type="KEGG" id="soz:Spy49_0001"/>
<dbReference type="HOGENOM" id="CLU_026910_3_2_9"/>
<dbReference type="Proteomes" id="UP000001039">
    <property type="component" value="Chromosome"/>
</dbReference>
<dbReference type="GO" id="GO:0005737">
    <property type="term" value="C:cytoplasm"/>
    <property type="evidence" value="ECO:0007669"/>
    <property type="project" value="UniProtKB-SubCell"/>
</dbReference>
<dbReference type="GO" id="GO:0005886">
    <property type="term" value="C:plasma membrane"/>
    <property type="evidence" value="ECO:0007669"/>
    <property type="project" value="TreeGrafter"/>
</dbReference>
<dbReference type="GO" id="GO:0005524">
    <property type="term" value="F:ATP binding"/>
    <property type="evidence" value="ECO:0007669"/>
    <property type="project" value="UniProtKB-UniRule"/>
</dbReference>
<dbReference type="GO" id="GO:0016887">
    <property type="term" value="F:ATP hydrolysis activity"/>
    <property type="evidence" value="ECO:0007669"/>
    <property type="project" value="InterPro"/>
</dbReference>
<dbReference type="GO" id="GO:0003688">
    <property type="term" value="F:DNA replication origin binding"/>
    <property type="evidence" value="ECO:0007669"/>
    <property type="project" value="UniProtKB-UniRule"/>
</dbReference>
<dbReference type="GO" id="GO:0008289">
    <property type="term" value="F:lipid binding"/>
    <property type="evidence" value="ECO:0007669"/>
    <property type="project" value="UniProtKB-KW"/>
</dbReference>
<dbReference type="GO" id="GO:0006270">
    <property type="term" value="P:DNA replication initiation"/>
    <property type="evidence" value="ECO:0007669"/>
    <property type="project" value="UniProtKB-UniRule"/>
</dbReference>
<dbReference type="GO" id="GO:0006275">
    <property type="term" value="P:regulation of DNA replication"/>
    <property type="evidence" value="ECO:0007669"/>
    <property type="project" value="UniProtKB-UniRule"/>
</dbReference>
<dbReference type="CDD" id="cd00009">
    <property type="entry name" value="AAA"/>
    <property type="match status" value="1"/>
</dbReference>
<dbReference type="CDD" id="cd06571">
    <property type="entry name" value="Bac_DnaA_C"/>
    <property type="match status" value="1"/>
</dbReference>
<dbReference type="FunFam" id="3.40.50.300:FF:000668">
    <property type="entry name" value="Chromosomal replication initiator protein DnaA"/>
    <property type="match status" value="1"/>
</dbReference>
<dbReference type="Gene3D" id="1.10.1750.10">
    <property type="match status" value="1"/>
</dbReference>
<dbReference type="Gene3D" id="1.10.8.60">
    <property type="match status" value="1"/>
</dbReference>
<dbReference type="Gene3D" id="3.40.50.300">
    <property type="entry name" value="P-loop containing nucleotide triphosphate hydrolases"/>
    <property type="match status" value="1"/>
</dbReference>
<dbReference type="HAMAP" id="MF_00377">
    <property type="entry name" value="DnaA_bact"/>
    <property type="match status" value="1"/>
</dbReference>
<dbReference type="InterPro" id="IPR003593">
    <property type="entry name" value="AAA+_ATPase"/>
</dbReference>
<dbReference type="InterPro" id="IPR001957">
    <property type="entry name" value="Chromosome_initiator_DnaA"/>
</dbReference>
<dbReference type="InterPro" id="IPR020591">
    <property type="entry name" value="Chromosome_initiator_DnaA-like"/>
</dbReference>
<dbReference type="InterPro" id="IPR018312">
    <property type="entry name" value="Chromosome_initiator_DnaA_CS"/>
</dbReference>
<dbReference type="InterPro" id="IPR013159">
    <property type="entry name" value="DnaA_C"/>
</dbReference>
<dbReference type="InterPro" id="IPR013317">
    <property type="entry name" value="DnaA_dom"/>
</dbReference>
<dbReference type="InterPro" id="IPR027417">
    <property type="entry name" value="P-loop_NTPase"/>
</dbReference>
<dbReference type="InterPro" id="IPR010921">
    <property type="entry name" value="Trp_repressor/repl_initiator"/>
</dbReference>
<dbReference type="NCBIfam" id="TIGR00362">
    <property type="entry name" value="DnaA"/>
    <property type="match status" value="1"/>
</dbReference>
<dbReference type="PANTHER" id="PTHR30050">
    <property type="entry name" value="CHROMOSOMAL REPLICATION INITIATOR PROTEIN DNAA"/>
    <property type="match status" value="1"/>
</dbReference>
<dbReference type="PANTHER" id="PTHR30050:SF2">
    <property type="entry name" value="CHROMOSOMAL REPLICATION INITIATOR PROTEIN DNAA"/>
    <property type="match status" value="1"/>
</dbReference>
<dbReference type="Pfam" id="PF00308">
    <property type="entry name" value="Bac_DnaA"/>
    <property type="match status" value="1"/>
</dbReference>
<dbReference type="Pfam" id="PF08299">
    <property type="entry name" value="Bac_DnaA_C"/>
    <property type="match status" value="1"/>
</dbReference>
<dbReference type="PRINTS" id="PR00051">
    <property type="entry name" value="DNAA"/>
</dbReference>
<dbReference type="SMART" id="SM00382">
    <property type="entry name" value="AAA"/>
    <property type="match status" value="1"/>
</dbReference>
<dbReference type="SMART" id="SM00760">
    <property type="entry name" value="Bac_DnaA_C"/>
    <property type="match status" value="1"/>
</dbReference>
<dbReference type="SUPFAM" id="SSF52540">
    <property type="entry name" value="P-loop containing nucleoside triphosphate hydrolases"/>
    <property type="match status" value="1"/>
</dbReference>
<dbReference type="SUPFAM" id="SSF48295">
    <property type="entry name" value="TrpR-like"/>
    <property type="match status" value="1"/>
</dbReference>
<dbReference type="PROSITE" id="PS01008">
    <property type="entry name" value="DNAA"/>
    <property type="match status" value="1"/>
</dbReference>
<proteinExistence type="inferred from homology"/>
<comment type="function">
    <text evidence="1">Plays an essential role in the initiation and regulation of chromosomal replication. ATP-DnaA binds to the origin of replication (oriC) to initiate formation of the DNA replication initiation complex once per cell cycle. Binds the DnaA box (a 9 base pair repeat at the origin) and separates the double-stranded (ds)DNA. Forms a right-handed helical filament on oriC DNA; dsDNA binds to the exterior of the filament while single-stranded (ss)DNA is stabiized in the filament's interior. The ATP-DnaA-oriC complex binds and stabilizes one strand of the AT-rich DNA unwinding element (DUE), permitting loading of DNA polymerase. After initiation quickly degrades to an ADP-DnaA complex that is not apt for DNA replication. Binds acidic phospholipids.</text>
</comment>
<comment type="subunit">
    <text evidence="1">Oligomerizes as a right-handed, spiral filament on DNA at oriC.</text>
</comment>
<comment type="subcellular location">
    <subcellularLocation>
        <location evidence="1">Cytoplasm</location>
    </subcellularLocation>
</comment>
<comment type="domain">
    <text evidence="1">Domain I is involved in oligomerization and binding regulators, domain II is flexibile and of varying length in different bacteria, domain III forms the AAA+ region, while domain IV binds dsDNA.</text>
</comment>
<comment type="similarity">
    <text evidence="1">Belongs to the DnaA family.</text>
</comment>
<gene>
    <name evidence="1" type="primary">dnaA</name>
    <name type="ordered locus">Spy49_0001</name>
</gene>
<protein>
    <recommendedName>
        <fullName evidence="1">Chromosomal replication initiator protein DnaA</fullName>
    </recommendedName>
</protein>
<feature type="chain" id="PRO_1000122026" description="Chromosomal replication initiator protein DnaA">
    <location>
        <begin position="1"/>
        <end position="451"/>
    </location>
</feature>
<feature type="region of interest" description="Domain I, interacts with DnaA modulators" evidence="1">
    <location>
        <begin position="1"/>
        <end position="77"/>
    </location>
</feature>
<feature type="region of interest" description="Domain II" evidence="1">
    <location>
        <begin position="77"/>
        <end position="110"/>
    </location>
</feature>
<feature type="region of interest" description="Domain III, AAA+ region" evidence="1">
    <location>
        <begin position="111"/>
        <end position="329"/>
    </location>
</feature>
<feature type="region of interest" description="Domain IV, binds dsDNA" evidence="1">
    <location>
        <begin position="330"/>
        <end position="451"/>
    </location>
</feature>
<feature type="binding site" evidence="1">
    <location>
        <position position="155"/>
    </location>
    <ligand>
        <name>ATP</name>
        <dbReference type="ChEBI" id="CHEBI:30616"/>
    </ligand>
</feature>
<feature type="binding site" evidence="1">
    <location>
        <position position="157"/>
    </location>
    <ligand>
        <name>ATP</name>
        <dbReference type="ChEBI" id="CHEBI:30616"/>
    </ligand>
</feature>
<feature type="binding site" evidence="1">
    <location>
        <position position="158"/>
    </location>
    <ligand>
        <name>ATP</name>
        <dbReference type="ChEBI" id="CHEBI:30616"/>
    </ligand>
</feature>
<feature type="binding site" evidence="1">
    <location>
        <position position="159"/>
    </location>
    <ligand>
        <name>ATP</name>
        <dbReference type="ChEBI" id="CHEBI:30616"/>
    </ligand>
</feature>
<organism>
    <name type="scientific">Streptococcus pyogenes serotype M49 (strain NZ131)</name>
    <dbReference type="NCBI Taxonomy" id="471876"/>
    <lineage>
        <taxon>Bacteria</taxon>
        <taxon>Bacillati</taxon>
        <taxon>Bacillota</taxon>
        <taxon>Bacilli</taxon>
        <taxon>Lactobacillales</taxon>
        <taxon>Streptococcaceae</taxon>
        <taxon>Streptococcus</taxon>
    </lineage>
</organism>
<name>DNAA_STRPZ</name>
<sequence>MTENEQIFWNRVLELAQSQLKQATYEFFVHDARLLKVDKHIATIYLDQMKELFWEKNLKDVILTAGFEVYNAQISVDYVFEEDLMIEQNQTKINQKPKQQALNSLPTVTSDLNSKYSFENFIQGDENRWAVAASIAVANTPGTTYNPLFIWGGPGLGKTHLLNAIGNSVLLENPNARIKYITAENFINEFVIHIRLDTMDELKEKFRNLDLLLIDDIQSLAKKTLSGTQEEFFNTFNALHNNNKQIVLTSDRTPDHLNDLEDRLVTRFKWGLTVNITPPDFETRVAILTNKIQEYNFIFPQDTIEYLAGQFDSNVRDLEGALKDISLGANFKQIDTITVDIAAEAIRARKQDGPKMTVIPIEEIQAQGGKFYGVTGKEIKATKRTQNIVLARQVAMFLAREMTDNSLPKIGKEFGGRDHSTVLHAYNKIKNMISQDESLRIEIETIKNKIK</sequence>